<gene>
    <name evidence="1" type="primary">lpxD</name>
    <name type="ordered locus">Nham_1703</name>
</gene>
<keyword id="KW-0012">Acyltransferase</keyword>
<keyword id="KW-0441">Lipid A biosynthesis</keyword>
<keyword id="KW-0444">Lipid biosynthesis</keyword>
<keyword id="KW-0443">Lipid metabolism</keyword>
<keyword id="KW-1185">Reference proteome</keyword>
<keyword id="KW-0677">Repeat</keyword>
<keyword id="KW-0808">Transferase</keyword>
<protein>
    <recommendedName>
        <fullName evidence="1">UDP-3-O-acylglucosamine N-acyltransferase</fullName>
        <ecNumber evidence="1">2.3.1.191</ecNumber>
    </recommendedName>
</protein>
<accession>Q1QMM8</accession>
<evidence type="ECO:0000255" key="1">
    <source>
        <dbReference type="HAMAP-Rule" id="MF_00523"/>
    </source>
</evidence>
<name>LPXD_NITHX</name>
<organism>
    <name type="scientific">Nitrobacter hamburgensis (strain DSM 10229 / NCIMB 13809 / X14)</name>
    <dbReference type="NCBI Taxonomy" id="323097"/>
    <lineage>
        <taxon>Bacteria</taxon>
        <taxon>Pseudomonadati</taxon>
        <taxon>Pseudomonadota</taxon>
        <taxon>Alphaproteobacteria</taxon>
        <taxon>Hyphomicrobiales</taxon>
        <taxon>Nitrobacteraceae</taxon>
        <taxon>Nitrobacter</taxon>
    </lineage>
</organism>
<feature type="chain" id="PRO_0000264399" description="UDP-3-O-acylglucosamine N-acyltransferase">
    <location>
        <begin position="1"/>
        <end position="361"/>
    </location>
</feature>
<feature type="active site" description="Proton acceptor" evidence="1">
    <location>
        <position position="258"/>
    </location>
</feature>
<proteinExistence type="inferred from homology"/>
<reference key="1">
    <citation type="submission" date="2006-03" db="EMBL/GenBank/DDBJ databases">
        <title>Complete sequence of chromosome of Nitrobacter hamburgensis X14.</title>
        <authorList>
            <consortium name="US DOE Joint Genome Institute"/>
            <person name="Copeland A."/>
            <person name="Lucas S."/>
            <person name="Lapidus A."/>
            <person name="Barry K."/>
            <person name="Detter J.C."/>
            <person name="Glavina del Rio T."/>
            <person name="Hammon N."/>
            <person name="Israni S."/>
            <person name="Dalin E."/>
            <person name="Tice H."/>
            <person name="Pitluck S."/>
            <person name="Chain P."/>
            <person name="Malfatti S."/>
            <person name="Shin M."/>
            <person name="Vergez L."/>
            <person name="Schmutz J."/>
            <person name="Larimer F."/>
            <person name="Land M."/>
            <person name="Hauser L."/>
            <person name="Kyrpides N."/>
            <person name="Ivanova N."/>
            <person name="Ward B."/>
            <person name="Arp D."/>
            <person name="Klotz M."/>
            <person name="Stein L."/>
            <person name="O'Mullan G."/>
            <person name="Starkenburg S."/>
            <person name="Sayavedra L."/>
            <person name="Poret-Peterson A.T."/>
            <person name="Gentry M.E."/>
            <person name="Bruce D."/>
            <person name="Richardson P."/>
        </authorList>
    </citation>
    <scope>NUCLEOTIDE SEQUENCE [LARGE SCALE GENOMIC DNA]</scope>
    <source>
        <strain>DSM 10229 / NCIMB 13809 / X14</strain>
    </source>
</reference>
<comment type="function">
    <text evidence="1">Catalyzes the N-acylation of UDP-3-O-acylglucosamine using 3-hydroxyacyl-ACP as the acyl donor. Is involved in the biosynthesis of lipid A, a phosphorylated glycolipid that anchors the lipopolysaccharide to the outer membrane of the cell.</text>
</comment>
<comment type="catalytic activity">
    <reaction evidence="1">
        <text>a UDP-3-O-[(3R)-3-hydroxyacyl]-alpha-D-glucosamine + a (3R)-hydroxyacyl-[ACP] = a UDP-2-N,3-O-bis[(3R)-3-hydroxyacyl]-alpha-D-glucosamine + holo-[ACP] + H(+)</text>
        <dbReference type="Rhea" id="RHEA:53836"/>
        <dbReference type="Rhea" id="RHEA-COMP:9685"/>
        <dbReference type="Rhea" id="RHEA-COMP:9945"/>
        <dbReference type="ChEBI" id="CHEBI:15378"/>
        <dbReference type="ChEBI" id="CHEBI:64479"/>
        <dbReference type="ChEBI" id="CHEBI:78827"/>
        <dbReference type="ChEBI" id="CHEBI:137740"/>
        <dbReference type="ChEBI" id="CHEBI:137748"/>
        <dbReference type="EC" id="2.3.1.191"/>
    </reaction>
</comment>
<comment type="pathway">
    <text evidence="1">Bacterial outer membrane biogenesis; LPS lipid A biosynthesis.</text>
</comment>
<comment type="subunit">
    <text evidence="1">Homotrimer.</text>
</comment>
<comment type="similarity">
    <text evidence="1">Belongs to the transferase hexapeptide repeat family. LpxD subfamily.</text>
</comment>
<dbReference type="EC" id="2.3.1.191" evidence="1"/>
<dbReference type="EMBL" id="CP000319">
    <property type="protein sequence ID" value="ABE62519.1"/>
    <property type="molecule type" value="Genomic_DNA"/>
</dbReference>
<dbReference type="RefSeq" id="WP_011510201.1">
    <property type="nucleotide sequence ID" value="NC_007964.1"/>
</dbReference>
<dbReference type="SMR" id="Q1QMM8"/>
<dbReference type="STRING" id="323097.Nham_1703"/>
<dbReference type="KEGG" id="nha:Nham_1703"/>
<dbReference type="eggNOG" id="COG1044">
    <property type="taxonomic scope" value="Bacteria"/>
</dbReference>
<dbReference type="HOGENOM" id="CLU_049865_0_2_5"/>
<dbReference type="OrthoDB" id="9784739at2"/>
<dbReference type="UniPathway" id="UPA00973"/>
<dbReference type="Proteomes" id="UP000001953">
    <property type="component" value="Chromosome"/>
</dbReference>
<dbReference type="GO" id="GO:0016020">
    <property type="term" value="C:membrane"/>
    <property type="evidence" value="ECO:0007669"/>
    <property type="project" value="GOC"/>
</dbReference>
<dbReference type="GO" id="GO:0016410">
    <property type="term" value="F:N-acyltransferase activity"/>
    <property type="evidence" value="ECO:0007669"/>
    <property type="project" value="InterPro"/>
</dbReference>
<dbReference type="GO" id="GO:0009245">
    <property type="term" value="P:lipid A biosynthetic process"/>
    <property type="evidence" value="ECO:0007669"/>
    <property type="project" value="UniProtKB-UniRule"/>
</dbReference>
<dbReference type="CDD" id="cd03352">
    <property type="entry name" value="LbH_LpxD"/>
    <property type="match status" value="1"/>
</dbReference>
<dbReference type="Gene3D" id="2.160.10.10">
    <property type="entry name" value="Hexapeptide repeat proteins"/>
    <property type="match status" value="1"/>
</dbReference>
<dbReference type="Gene3D" id="3.40.1390.10">
    <property type="entry name" value="MurE/MurF, N-terminal domain"/>
    <property type="match status" value="1"/>
</dbReference>
<dbReference type="HAMAP" id="MF_00523">
    <property type="entry name" value="LpxD"/>
    <property type="match status" value="1"/>
</dbReference>
<dbReference type="InterPro" id="IPR001451">
    <property type="entry name" value="Hexapep"/>
</dbReference>
<dbReference type="InterPro" id="IPR007691">
    <property type="entry name" value="LpxD"/>
</dbReference>
<dbReference type="InterPro" id="IPR011004">
    <property type="entry name" value="Trimer_LpxA-like_sf"/>
</dbReference>
<dbReference type="InterPro" id="IPR020573">
    <property type="entry name" value="UDP_GlcNAc_AcTrfase_non-rep"/>
</dbReference>
<dbReference type="NCBIfam" id="TIGR01853">
    <property type="entry name" value="lipid_A_lpxD"/>
    <property type="match status" value="1"/>
</dbReference>
<dbReference type="NCBIfam" id="NF002060">
    <property type="entry name" value="PRK00892.1"/>
    <property type="match status" value="1"/>
</dbReference>
<dbReference type="PANTHER" id="PTHR43378">
    <property type="entry name" value="UDP-3-O-ACYLGLUCOSAMINE N-ACYLTRANSFERASE"/>
    <property type="match status" value="1"/>
</dbReference>
<dbReference type="PANTHER" id="PTHR43378:SF2">
    <property type="entry name" value="UDP-3-O-ACYLGLUCOSAMINE N-ACYLTRANSFERASE 1, MITOCHONDRIAL-RELATED"/>
    <property type="match status" value="1"/>
</dbReference>
<dbReference type="Pfam" id="PF00132">
    <property type="entry name" value="Hexapep"/>
    <property type="match status" value="2"/>
</dbReference>
<dbReference type="Pfam" id="PF14602">
    <property type="entry name" value="Hexapep_2"/>
    <property type="match status" value="2"/>
</dbReference>
<dbReference type="Pfam" id="PF04613">
    <property type="entry name" value="LpxD"/>
    <property type="match status" value="1"/>
</dbReference>
<dbReference type="SUPFAM" id="SSF51161">
    <property type="entry name" value="Trimeric LpxA-like enzymes"/>
    <property type="match status" value="1"/>
</dbReference>
<dbReference type="PROSITE" id="PS00101">
    <property type="entry name" value="HEXAPEP_TRANSFERASES"/>
    <property type="match status" value="2"/>
</dbReference>
<sequence length="361" mass="37628">MTQPAFFKQPPPLTLVEIAASTGAQLIDASRGEQRITGLASLDQAGPMHLTFFDNHKYAAQLAATRAGACFVSPRFEASVPGHVAVLRSAAPFRAFVRIARDCHADTLRPQSWFDNATIAASAVVHPSAHLEDAVVVDPLAVIGPGVEIGTGSVIGSGAVIGPGVRIGRNCNVGAGTTIQVALIGNNVLIHPGCHIGQDGYGFIFFGSEGHVKVPQTGRVLIQNDVEIGAGTTIDRGSLRDTVIGEGTKIDNQVQIGHNVTIGRRCLLAAQIGLAGSLTIGDNVALGAKVGINNHLHIGDGAQVVAMSGVKDDIPPNGRWGGYFAKPTRQWYRELFAVERLARDGAPNAGSATPDPTDRGA</sequence>